<organism>
    <name type="scientific">Methylobacterium sp. (strain 4-46)</name>
    <dbReference type="NCBI Taxonomy" id="426117"/>
    <lineage>
        <taxon>Bacteria</taxon>
        <taxon>Pseudomonadati</taxon>
        <taxon>Pseudomonadota</taxon>
        <taxon>Alphaproteobacteria</taxon>
        <taxon>Hyphomicrobiales</taxon>
        <taxon>Methylobacteriaceae</taxon>
        <taxon>Methylobacterium</taxon>
    </lineage>
</organism>
<sequence length="309" mass="33331">MTDLTRVVTEIAEEMRARPDRGEVATYIPELARMDPRAFGMVVIDADGEVAAAGDCDVPFSIQSISKVFTLTLALGMVGDRLWRRVGREPSGSPFNSIVQLEYERGIPRNPFINAGAIAVTDVILSRHQPREALGEILRFLQFLAGDAAIAIDESVAASEQRTGYRNMALANFMKAHGVLDNPVPYLLGVYFHHCAIAMTCRQLAEAGRFLAHSGRHPATGHLVVQPERARRINAVMLTCGHYDGSGEFAYRVGLPGKSGVGGGILAIAPGRASIAVWSPGLDAAGNSHLGRIALEMLTKRLGWSIFGQ</sequence>
<feature type="chain" id="PRO_1000119534" description="Glutaminase">
    <location>
        <begin position="1"/>
        <end position="309"/>
    </location>
</feature>
<feature type="binding site" evidence="1">
    <location>
        <position position="64"/>
    </location>
    <ligand>
        <name>substrate</name>
    </ligand>
</feature>
<feature type="binding site" evidence="1">
    <location>
        <position position="114"/>
    </location>
    <ligand>
        <name>substrate</name>
    </ligand>
</feature>
<feature type="binding site" evidence="1">
    <location>
        <position position="160"/>
    </location>
    <ligand>
        <name>substrate</name>
    </ligand>
</feature>
<feature type="binding site" evidence="1">
    <location>
        <position position="167"/>
    </location>
    <ligand>
        <name>substrate</name>
    </ligand>
</feature>
<feature type="binding site" evidence="1">
    <location>
        <position position="191"/>
    </location>
    <ligand>
        <name>substrate</name>
    </ligand>
</feature>
<feature type="binding site" evidence="1">
    <location>
        <position position="243"/>
    </location>
    <ligand>
        <name>substrate</name>
    </ligand>
</feature>
<feature type="binding site" evidence="1">
    <location>
        <position position="261"/>
    </location>
    <ligand>
        <name>substrate</name>
    </ligand>
</feature>
<keyword id="KW-0378">Hydrolase</keyword>
<accession>B0UQS5</accession>
<proteinExistence type="inferred from homology"/>
<evidence type="ECO:0000255" key="1">
    <source>
        <dbReference type="HAMAP-Rule" id="MF_00313"/>
    </source>
</evidence>
<gene>
    <name evidence="1" type="primary">glsA</name>
    <name type="ordered locus">M446_4570</name>
</gene>
<dbReference type="EC" id="3.5.1.2" evidence="1"/>
<dbReference type="EMBL" id="CP000943">
    <property type="protein sequence ID" value="ACA18911.1"/>
    <property type="molecule type" value="Genomic_DNA"/>
</dbReference>
<dbReference type="RefSeq" id="WP_012334300.1">
    <property type="nucleotide sequence ID" value="NC_010511.1"/>
</dbReference>
<dbReference type="SMR" id="B0UQS5"/>
<dbReference type="STRING" id="426117.M446_4570"/>
<dbReference type="KEGG" id="met:M446_4570"/>
<dbReference type="eggNOG" id="COG2066">
    <property type="taxonomic scope" value="Bacteria"/>
</dbReference>
<dbReference type="HOGENOM" id="CLU_027932_1_1_5"/>
<dbReference type="GO" id="GO:0004359">
    <property type="term" value="F:glutaminase activity"/>
    <property type="evidence" value="ECO:0007669"/>
    <property type="project" value="UniProtKB-UniRule"/>
</dbReference>
<dbReference type="GO" id="GO:0006537">
    <property type="term" value="P:glutamate biosynthetic process"/>
    <property type="evidence" value="ECO:0007669"/>
    <property type="project" value="TreeGrafter"/>
</dbReference>
<dbReference type="GO" id="GO:0006543">
    <property type="term" value="P:glutamine catabolic process"/>
    <property type="evidence" value="ECO:0007669"/>
    <property type="project" value="TreeGrafter"/>
</dbReference>
<dbReference type="FunFam" id="3.40.710.10:FF:000005">
    <property type="entry name" value="Glutaminase"/>
    <property type="match status" value="1"/>
</dbReference>
<dbReference type="Gene3D" id="3.40.710.10">
    <property type="entry name" value="DD-peptidase/beta-lactamase superfamily"/>
    <property type="match status" value="1"/>
</dbReference>
<dbReference type="HAMAP" id="MF_00313">
    <property type="entry name" value="Glutaminase"/>
    <property type="match status" value="1"/>
</dbReference>
<dbReference type="InterPro" id="IPR012338">
    <property type="entry name" value="Beta-lactam/transpept-like"/>
</dbReference>
<dbReference type="InterPro" id="IPR015868">
    <property type="entry name" value="Glutaminase"/>
</dbReference>
<dbReference type="NCBIfam" id="TIGR03814">
    <property type="entry name" value="Gln_ase"/>
    <property type="match status" value="1"/>
</dbReference>
<dbReference type="NCBIfam" id="NF002133">
    <property type="entry name" value="PRK00971.1-2"/>
    <property type="match status" value="1"/>
</dbReference>
<dbReference type="PANTHER" id="PTHR12544">
    <property type="entry name" value="GLUTAMINASE"/>
    <property type="match status" value="1"/>
</dbReference>
<dbReference type="PANTHER" id="PTHR12544:SF29">
    <property type="entry name" value="GLUTAMINASE"/>
    <property type="match status" value="1"/>
</dbReference>
<dbReference type="Pfam" id="PF04960">
    <property type="entry name" value="Glutaminase"/>
    <property type="match status" value="1"/>
</dbReference>
<dbReference type="SUPFAM" id="SSF56601">
    <property type="entry name" value="beta-lactamase/transpeptidase-like"/>
    <property type="match status" value="1"/>
</dbReference>
<name>GLSA_METS4</name>
<reference key="1">
    <citation type="submission" date="2008-02" db="EMBL/GenBank/DDBJ databases">
        <title>Complete sequence of chromosome of Methylobacterium sp. 4-46.</title>
        <authorList>
            <consortium name="US DOE Joint Genome Institute"/>
            <person name="Copeland A."/>
            <person name="Lucas S."/>
            <person name="Lapidus A."/>
            <person name="Glavina del Rio T."/>
            <person name="Dalin E."/>
            <person name="Tice H."/>
            <person name="Bruce D."/>
            <person name="Goodwin L."/>
            <person name="Pitluck S."/>
            <person name="Chertkov O."/>
            <person name="Brettin T."/>
            <person name="Detter J.C."/>
            <person name="Han C."/>
            <person name="Kuske C.R."/>
            <person name="Schmutz J."/>
            <person name="Larimer F."/>
            <person name="Land M."/>
            <person name="Hauser L."/>
            <person name="Kyrpides N."/>
            <person name="Ivanova N."/>
            <person name="Marx C.J."/>
            <person name="Richardson P."/>
        </authorList>
    </citation>
    <scope>NUCLEOTIDE SEQUENCE [LARGE SCALE GENOMIC DNA]</scope>
    <source>
        <strain>4-46</strain>
    </source>
</reference>
<protein>
    <recommendedName>
        <fullName evidence="1">Glutaminase</fullName>
        <ecNumber evidence="1">3.5.1.2</ecNumber>
    </recommendedName>
</protein>
<comment type="catalytic activity">
    <reaction evidence="1">
        <text>L-glutamine + H2O = L-glutamate + NH4(+)</text>
        <dbReference type="Rhea" id="RHEA:15889"/>
        <dbReference type="ChEBI" id="CHEBI:15377"/>
        <dbReference type="ChEBI" id="CHEBI:28938"/>
        <dbReference type="ChEBI" id="CHEBI:29985"/>
        <dbReference type="ChEBI" id="CHEBI:58359"/>
        <dbReference type="EC" id="3.5.1.2"/>
    </reaction>
</comment>
<comment type="subunit">
    <text evidence="1">Homotetramer.</text>
</comment>
<comment type="similarity">
    <text evidence="1">Belongs to the glutaminase family.</text>
</comment>